<keyword id="KW-0143">Chaperone</keyword>
<keyword id="KW-0963">Cytoplasm</keyword>
<keyword id="KW-1015">Disulfide bond</keyword>
<keyword id="KW-0676">Redox-active center</keyword>
<keyword id="KW-1185">Reference proteome</keyword>
<keyword id="KW-0862">Zinc</keyword>
<evidence type="ECO:0000255" key="1">
    <source>
        <dbReference type="HAMAP-Rule" id="MF_00117"/>
    </source>
</evidence>
<organism>
    <name type="scientific">Chromobacterium violaceum (strain ATCC 12472 / DSM 30191 / JCM 1249 / CCUG 213 / NBRC 12614 / NCIMB 9131 / NCTC 9757 / MK)</name>
    <dbReference type="NCBI Taxonomy" id="243365"/>
    <lineage>
        <taxon>Bacteria</taxon>
        <taxon>Pseudomonadati</taxon>
        <taxon>Pseudomonadota</taxon>
        <taxon>Betaproteobacteria</taxon>
        <taxon>Neisseriales</taxon>
        <taxon>Chromobacteriaceae</taxon>
        <taxon>Chromobacterium</taxon>
    </lineage>
</organism>
<proteinExistence type="inferred from homology"/>
<gene>
    <name evidence="1" type="primary">hslO</name>
    <name type="ordered locus">CV_2000</name>
</gene>
<name>HSLO_CHRVO</name>
<comment type="function">
    <text evidence="1">Redox regulated molecular chaperone. Protects both thermally unfolding and oxidatively damaged proteins from irreversible aggregation. Plays an important role in the bacterial defense system toward oxidative stress.</text>
</comment>
<comment type="subcellular location">
    <subcellularLocation>
        <location evidence="1">Cytoplasm</location>
    </subcellularLocation>
</comment>
<comment type="PTM">
    <text evidence="1">Under oxidizing conditions two disulfide bonds are formed involving the reactive cysteines. Under reducing conditions zinc is bound to the reactive cysteines and the protein is inactive.</text>
</comment>
<comment type="similarity">
    <text evidence="1">Belongs to the HSP33 family.</text>
</comment>
<feature type="chain" id="PRO_0000192169" description="33 kDa chaperonin">
    <location>
        <begin position="1"/>
        <end position="294"/>
    </location>
</feature>
<feature type="disulfide bond" description="Redox-active" evidence="1">
    <location>
        <begin position="230"/>
        <end position="232"/>
    </location>
</feature>
<feature type="disulfide bond" description="Redox-active" evidence="1">
    <location>
        <begin position="263"/>
        <end position="266"/>
    </location>
</feature>
<sequence length="294" mass="32615">MNMNHHDKLQRFLFDGAPVRGALVRLDGAWQQVLARRAYPQALKTVLGEMMAASVLMAANLKFDGSLILQIHGTGALKLAVVECNNDRTVRATAKWDGDLDGKPLKALLGEGGKFVLTLEPRLDKNQTWQGIVALEGDSVGQMLENYMLRSEQLDTALVLASGDEAAAGMLLQRLPEGHGEAEGWDRVQMLGRTLKAEELLGLGAEDILHRLFHEEQVRVFEQETVSFNCNCSRERVSNMLTMLGGQEVGDVLLEQGSVEIVCDYCNQRYVFDEEDANQLFDYDVVAAAREARH</sequence>
<protein>
    <recommendedName>
        <fullName evidence="1">33 kDa chaperonin</fullName>
    </recommendedName>
    <alternativeName>
        <fullName evidence="1">Heat shock protein 33 homolog</fullName>
        <shortName evidence="1">HSP33</shortName>
    </alternativeName>
</protein>
<dbReference type="EMBL" id="AE016825">
    <property type="protein sequence ID" value="AAQ59672.1"/>
    <property type="molecule type" value="Genomic_DNA"/>
</dbReference>
<dbReference type="RefSeq" id="WP_011135548.1">
    <property type="nucleotide sequence ID" value="NC_005085.1"/>
</dbReference>
<dbReference type="SMR" id="Q7NWI9"/>
<dbReference type="STRING" id="243365.CV_2000"/>
<dbReference type="KEGG" id="cvi:CV_2000"/>
<dbReference type="eggNOG" id="COG1281">
    <property type="taxonomic scope" value="Bacteria"/>
</dbReference>
<dbReference type="HOGENOM" id="CLU_054493_0_0_4"/>
<dbReference type="OrthoDB" id="9793753at2"/>
<dbReference type="Proteomes" id="UP000001424">
    <property type="component" value="Chromosome"/>
</dbReference>
<dbReference type="GO" id="GO:0005737">
    <property type="term" value="C:cytoplasm"/>
    <property type="evidence" value="ECO:0007669"/>
    <property type="project" value="UniProtKB-SubCell"/>
</dbReference>
<dbReference type="GO" id="GO:0044183">
    <property type="term" value="F:protein folding chaperone"/>
    <property type="evidence" value="ECO:0007669"/>
    <property type="project" value="TreeGrafter"/>
</dbReference>
<dbReference type="GO" id="GO:0051082">
    <property type="term" value="F:unfolded protein binding"/>
    <property type="evidence" value="ECO:0007669"/>
    <property type="project" value="UniProtKB-UniRule"/>
</dbReference>
<dbReference type="GO" id="GO:0042026">
    <property type="term" value="P:protein refolding"/>
    <property type="evidence" value="ECO:0007669"/>
    <property type="project" value="TreeGrafter"/>
</dbReference>
<dbReference type="CDD" id="cd00498">
    <property type="entry name" value="Hsp33"/>
    <property type="match status" value="1"/>
</dbReference>
<dbReference type="Gene3D" id="1.10.287.480">
    <property type="entry name" value="helix hairpin bin"/>
    <property type="match status" value="1"/>
</dbReference>
<dbReference type="Gene3D" id="3.55.30.10">
    <property type="entry name" value="Hsp33 domain"/>
    <property type="match status" value="1"/>
</dbReference>
<dbReference type="Gene3D" id="3.90.1280.10">
    <property type="entry name" value="HSP33 redox switch-like"/>
    <property type="match status" value="1"/>
</dbReference>
<dbReference type="HAMAP" id="MF_00117">
    <property type="entry name" value="HslO"/>
    <property type="match status" value="1"/>
</dbReference>
<dbReference type="InterPro" id="IPR000397">
    <property type="entry name" value="Heat_shock_Hsp33"/>
</dbReference>
<dbReference type="InterPro" id="IPR016154">
    <property type="entry name" value="Heat_shock_Hsp33_C"/>
</dbReference>
<dbReference type="InterPro" id="IPR016153">
    <property type="entry name" value="Heat_shock_Hsp33_N"/>
</dbReference>
<dbReference type="InterPro" id="IPR023212">
    <property type="entry name" value="Hsp33_helix_hairpin_bin_dom_sf"/>
</dbReference>
<dbReference type="NCBIfam" id="NF001033">
    <property type="entry name" value="PRK00114.1"/>
    <property type="match status" value="1"/>
</dbReference>
<dbReference type="PANTHER" id="PTHR30111">
    <property type="entry name" value="33 KDA CHAPERONIN"/>
    <property type="match status" value="1"/>
</dbReference>
<dbReference type="PANTHER" id="PTHR30111:SF1">
    <property type="entry name" value="33 KDA CHAPERONIN"/>
    <property type="match status" value="1"/>
</dbReference>
<dbReference type="Pfam" id="PF01430">
    <property type="entry name" value="HSP33"/>
    <property type="match status" value="1"/>
</dbReference>
<dbReference type="PIRSF" id="PIRSF005261">
    <property type="entry name" value="Heat_shock_Hsp33"/>
    <property type="match status" value="1"/>
</dbReference>
<dbReference type="SUPFAM" id="SSF64397">
    <property type="entry name" value="Hsp33 domain"/>
    <property type="match status" value="1"/>
</dbReference>
<dbReference type="SUPFAM" id="SSF118352">
    <property type="entry name" value="HSP33 redox switch-like"/>
    <property type="match status" value="1"/>
</dbReference>
<reference key="1">
    <citation type="journal article" date="2003" name="Proc. Natl. Acad. Sci. U.S.A.">
        <title>The complete genome sequence of Chromobacterium violaceum reveals remarkable and exploitable bacterial adaptability.</title>
        <authorList>
            <person name="Vasconcelos A.T.R."/>
            <person name="de Almeida D.F."/>
            <person name="Hungria M."/>
            <person name="Guimaraes C.T."/>
            <person name="Antonio R.V."/>
            <person name="Almeida F.C."/>
            <person name="de Almeida L.G.P."/>
            <person name="de Almeida R."/>
            <person name="Alves-Gomes J.A."/>
            <person name="Andrade E.M."/>
            <person name="Araripe J."/>
            <person name="de Araujo M.F.F."/>
            <person name="Astolfi-Filho S."/>
            <person name="Azevedo V."/>
            <person name="Baptista A.J."/>
            <person name="Bataus L.A.M."/>
            <person name="Batista J.S."/>
            <person name="Belo A."/>
            <person name="van den Berg C."/>
            <person name="Bogo M."/>
            <person name="Bonatto S."/>
            <person name="Bordignon J."/>
            <person name="Brigido M.M."/>
            <person name="Brito C.A."/>
            <person name="Brocchi M."/>
            <person name="Burity H.A."/>
            <person name="Camargo A.A."/>
            <person name="Cardoso D.D.P."/>
            <person name="Carneiro N.P."/>
            <person name="Carraro D.M."/>
            <person name="Carvalho C.M.B."/>
            <person name="Cascardo J.C.M."/>
            <person name="Cavada B.S."/>
            <person name="Chueire L.M.O."/>
            <person name="Creczynski-Pasa T.B."/>
            <person name="Cunha-Junior N.C."/>
            <person name="Fagundes N."/>
            <person name="Falcao C.L."/>
            <person name="Fantinatti F."/>
            <person name="Farias I.P."/>
            <person name="Felipe M.S.S."/>
            <person name="Ferrari L.P."/>
            <person name="Ferro J.A."/>
            <person name="Ferro M.I.T."/>
            <person name="Franco G.R."/>
            <person name="Freitas N.S.A."/>
            <person name="Furlan L.R."/>
            <person name="Gazzinelli R.T."/>
            <person name="Gomes E.A."/>
            <person name="Goncalves P.R."/>
            <person name="Grangeiro T.B."/>
            <person name="Grattapaglia D."/>
            <person name="Grisard E.C."/>
            <person name="Hanna E.S."/>
            <person name="Jardim S.N."/>
            <person name="Laurino J."/>
            <person name="Leoi L.C.T."/>
            <person name="Lima L.F.A."/>
            <person name="Loureiro M.F."/>
            <person name="Lyra M.C.C.P."/>
            <person name="Madeira H.M.F."/>
            <person name="Manfio G.P."/>
            <person name="Maranhao A.Q."/>
            <person name="Martins W.S."/>
            <person name="di Mauro S.M.Z."/>
            <person name="de Medeiros S.R.B."/>
            <person name="Meissner R.V."/>
            <person name="Moreira M.A.M."/>
            <person name="Nascimento F.F."/>
            <person name="Nicolas M.F."/>
            <person name="Oliveira J.G."/>
            <person name="Oliveira S.C."/>
            <person name="Paixao R.F.C."/>
            <person name="Parente J.A."/>
            <person name="Pedrosa F.O."/>
            <person name="Pena S.D.J."/>
            <person name="Pereira J.O."/>
            <person name="Pereira M."/>
            <person name="Pinto L.S.R.C."/>
            <person name="Pinto L.S."/>
            <person name="Porto J.I.R."/>
            <person name="Potrich D.P."/>
            <person name="Ramalho-Neto C.E."/>
            <person name="Reis A.M.M."/>
            <person name="Rigo L.U."/>
            <person name="Rondinelli E."/>
            <person name="Santos E.B.P."/>
            <person name="Santos F.R."/>
            <person name="Schneider M.P.C."/>
            <person name="Seuanez H.N."/>
            <person name="Silva A.M.R."/>
            <person name="da Silva A.L.C."/>
            <person name="Silva D.W."/>
            <person name="Silva R."/>
            <person name="Simoes I.C."/>
            <person name="Simon D."/>
            <person name="Soares C.M.A."/>
            <person name="Soares R.B.A."/>
            <person name="Souza E.M."/>
            <person name="Souza K.R.L."/>
            <person name="Souza R.C."/>
            <person name="Steffens M.B.R."/>
            <person name="Steindel M."/>
            <person name="Teixeira S.R."/>
            <person name="Urmenyi T."/>
            <person name="Vettore A."/>
            <person name="Wassem R."/>
            <person name="Zaha A."/>
            <person name="Simpson A.J.G."/>
        </authorList>
    </citation>
    <scope>NUCLEOTIDE SEQUENCE [LARGE SCALE GENOMIC DNA]</scope>
    <source>
        <strain>ATCC 12472 / DSM 30191 / JCM 1249 / CCUG 213 / NBRC 12614 / NCIMB 9131 / NCTC 9757 / MK</strain>
    </source>
</reference>
<accession>Q7NWI9</accession>